<feature type="chain" id="PRO_0000411453" description="Protease HtpX homolog">
    <location>
        <begin position="1"/>
        <end position="298"/>
    </location>
</feature>
<feature type="transmembrane region" description="Helical" evidence="1">
    <location>
        <begin position="14"/>
        <end position="34"/>
    </location>
</feature>
<feature type="transmembrane region" description="Helical" evidence="1">
    <location>
        <begin position="39"/>
        <end position="59"/>
    </location>
</feature>
<feature type="transmembrane region" description="Helical" evidence="1">
    <location>
        <begin position="158"/>
        <end position="178"/>
    </location>
</feature>
<feature type="transmembrane region" description="Helical" evidence="1">
    <location>
        <begin position="197"/>
        <end position="217"/>
    </location>
</feature>
<feature type="active site" evidence="1">
    <location>
        <position position="144"/>
    </location>
</feature>
<feature type="binding site" evidence="1">
    <location>
        <position position="143"/>
    </location>
    <ligand>
        <name>Zn(2+)</name>
        <dbReference type="ChEBI" id="CHEBI:29105"/>
        <note>catalytic</note>
    </ligand>
</feature>
<feature type="binding site" evidence="1">
    <location>
        <position position="147"/>
    </location>
    <ligand>
        <name>Zn(2+)</name>
        <dbReference type="ChEBI" id="CHEBI:29105"/>
        <note>catalytic</note>
    </ligand>
</feature>
<feature type="binding site" evidence="1">
    <location>
        <position position="226"/>
    </location>
    <ligand>
        <name>Zn(2+)</name>
        <dbReference type="ChEBI" id="CHEBI:29105"/>
        <note>catalytic</note>
    </ligand>
</feature>
<reference key="1">
    <citation type="journal article" date="2003" name="Genome Res.">
        <title>Genome sequence of an M3 strain of Streptococcus pyogenes reveals a large-scale genomic rearrangement in invasive strains and new insights into phage evolution.</title>
        <authorList>
            <person name="Nakagawa I."/>
            <person name="Kurokawa K."/>
            <person name="Yamashita A."/>
            <person name="Nakata M."/>
            <person name="Tomiyasu Y."/>
            <person name="Okahashi N."/>
            <person name="Kawabata S."/>
            <person name="Yamazaki K."/>
            <person name="Shiba T."/>
            <person name="Yasunaga T."/>
            <person name="Hayashi H."/>
            <person name="Hattori M."/>
            <person name="Hamada S."/>
        </authorList>
    </citation>
    <scope>NUCLEOTIDE SEQUENCE [LARGE SCALE GENOMIC DNA]</scope>
    <source>
        <strain>SSI-1</strain>
    </source>
</reference>
<organism>
    <name type="scientific">Streptococcus pyogenes serotype M3 (strain SSI-1)</name>
    <dbReference type="NCBI Taxonomy" id="193567"/>
    <lineage>
        <taxon>Bacteria</taxon>
        <taxon>Bacillati</taxon>
        <taxon>Bacillota</taxon>
        <taxon>Bacilli</taxon>
        <taxon>Lactobacillales</taxon>
        <taxon>Streptococcaceae</taxon>
        <taxon>Streptococcus</taxon>
    </lineage>
</organism>
<protein>
    <recommendedName>
        <fullName evidence="1">Protease HtpX homolog</fullName>
        <ecNumber evidence="1">3.4.24.-</ecNumber>
    </recommendedName>
</protein>
<keyword id="KW-1003">Cell membrane</keyword>
<keyword id="KW-0378">Hydrolase</keyword>
<keyword id="KW-0472">Membrane</keyword>
<keyword id="KW-0479">Metal-binding</keyword>
<keyword id="KW-0482">Metalloprotease</keyword>
<keyword id="KW-0645">Protease</keyword>
<keyword id="KW-0812">Transmembrane</keyword>
<keyword id="KW-1133">Transmembrane helix</keyword>
<keyword id="KW-0862">Zinc</keyword>
<accession>P0DD31</accession>
<accession>Q8K8K2</accession>
<proteinExistence type="inferred from homology"/>
<comment type="cofactor">
    <cofactor evidence="1">
        <name>Zn(2+)</name>
        <dbReference type="ChEBI" id="CHEBI:29105"/>
    </cofactor>
    <text evidence="1">Binds 1 zinc ion per subunit.</text>
</comment>
<comment type="subcellular location">
    <subcellularLocation>
        <location evidence="1">Cell membrane</location>
        <topology evidence="1">Multi-pass membrane protein</topology>
    </subcellularLocation>
</comment>
<comment type="similarity">
    <text evidence="1">Belongs to the peptidase M48B family.</text>
</comment>
<name>HTPX_STRPQ</name>
<gene>
    <name evidence="1" type="primary">htpX</name>
    <name type="ordered locus">SPs1617</name>
</gene>
<dbReference type="EC" id="3.4.24.-" evidence="1"/>
<dbReference type="EMBL" id="BA000034">
    <property type="protein sequence ID" value="BAC64712.1"/>
    <property type="molecule type" value="Genomic_DNA"/>
</dbReference>
<dbReference type="RefSeq" id="WP_011054199.1">
    <property type="nucleotide sequence ID" value="NC_004606.1"/>
</dbReference>
<dbReference type="SMR" id="P0DD31"/>
<dbReference type="KEGG" id="sps:SPs1617"/>
<dbReference type="HOGENOM" id="CLU_042266_2_1_9"/>
<dbReference type="GO" id="GO:0005886">
    <property type="term" value="C:plasma membrane"/>
    <property type="evidence" value="ECO:0007669"/>
    <property type="project" value="UniProtKB-SubCell"/>
</dbReference>
<dbReference type="GO" id="GO:0004222">
    <property type="term" value="F:metalloendopeptidase activity"/>
    <property type="evidence" value="ECO:0007669"/>
    <property type="project" value="UniProtKB-UniRule"/>
</dbReference>
<dbReference type="GO" id="GO:0008270">
    <property type="term" value="F:zinc ion binding"/>
    <property type="evidence" value="ECO:0007669"/>
    <property type="project" value="UniProtKB-UniRule"/>
</dbReference>
<dbReference type="GO" id="GO:0006508">
    <property type="term" value="P:proteolysis"/>
    <property type="evidence" value="ECO:0007669"/>
    <property type="project" value="UniProtKB-KW"/>
</dbReference>
<dbReference type="CDD" id="cd07340">
    <property type="entry name" value="M48B_Htpx_like"/>
    <property type="match status" value="1"/>
</dbReference>
<dbReference type="Gene3D" id="3.30.2010.10">
    <property type="entry name" value="Metalloproteases ('zincins'), catalytic domain"/>
    <property type="match status" value="1"/>
</dbReference>
<dbReference type="HAMAP" id="MF_00188">
    <property type="entry name" value="Pept_M48_protease_HtpX"/>
    <property type="match status" value="1"/>
</dbReference>
<dbReference type="InterPro" id="IPR050083">
    <property type="entry name" value="HtpX_protease"/>
</dbReference>
<dbReference type="InterPro" id="IPR022919">
    <property type="entry name" value="Pept_M48_protease_HtpX"/>
</dbReference>
<dbReference type="InterPro" id="IPR001915">
    <property type="entry name" value="Peptidase_M48"/>
</dbReference>
<dbReference type="NCBIfam" id="NF003425">
    <property type="entry name" value="PRK04897.1"/>
    <property type="match status" value="1"/>
</dbReference>
<dbReference type="PANTHER" id="PTHR43221">
    <property type="entry name" value="PROTEASE HTPX"/>
    <property type="match status" value="1"/>
</dbReference>
<dbReference type="PANTHER" id="PTHR43221:SF1">
    <property type="entry name" value="PROTEASE HTPX"/>
    <property type="match status" value="1"/>
</dbReference>
<dbReference type="Pfam" id="PF01435">
    <property type="entry name" value="Peptidase_M48"/>
    <property type="match status" value="1"/>
</dbReference>
<sequence length="298" mass="32730">MLYQQISQNKQRTVVLLVVFFALLALIGASAGYLLLDNYAMGLVLALVIGVIYATSMIFQSTSLVMSMNSAREVTEKEAPGFFHIVEDMAMVAQIPMPRVFIIEDPSLNAFATGSSPQNAAVAATTGLLEVMNREELEGVIGHEISHIRNYDIRISTIAVALASAVTVISSIGGRMLWYGGGSRRQRDDGDDDVLRIITLLLSLLSLLLAPLVASLIQLAISRQREYLADASSVELTRNPQGMIKALEKLQLSQPMKHPVDDASAALYINEPRKKRSFSSLFSTHPPIEERIERLKNM</sequence>
<evidence type="ECO:0000255" key="1">
    <source>
        <dbReference type="HAMAP-Rule" id="MF_00188"/>
    </source>
</evidence>